<name>DLX4_MOUSE</name>
<evidence type="ECO:0000250" key="1">
    <source>
        <dbReference type="UniProtKB" id="Q92988"/>
    </source>
</evidence>
<evidence type="ECO:0000255" key="2">
    <source>
        <dbReference type="PROSITE-ProRule" id="PRU00108"/>
    </source>
</evidence>
<evidence type="ECO:0000256" key="3">
    <source>
        <dbReference type="SAM" id="MobiDB-lite"/>
    </source>
</evidence>
<evidence type="ECO:0000269" key="4">
    <source>
    </source>
</evidence>
<evidence type="ECO:0000305" key="5"/>
<proteinExistence type="evidence at transcript level"/>
<feature type="chain" id="PRO_0000049029" description="Homeobox protein DLX-4">
    <location>
        <begin position="1"/>
        <end position="240"/>
    </location>
</feature>
<feature type="DNA-binding region" description="Homeobox" evidence="2">
    <location>
        <begin position="116"/>
        <end position="175"/>
    </location>
</feature>
<feature type="region of interest" description="Disordered" evidence="3">
    <location>
        <begin position="44"/>
        <end position="70"/>
    </location>
</feature>
<feature type="region of interest" description="Disordered" evidence="3">
    <location>
        <begin position="175"/>
        <end position="194"/>
    </location>
</feature>
<feature type="sequence conflict" description="In Ref. 1; AAC52995." evidence="5" ref="1">
    <original>N</original>
    <variation>D</variation>
    <location>
        <position position="132"/>
    </location>
</feature>
<feature type="sequence conflict" description="In Ref. 3; BAE26247." evidence="5" ref="3">
    <original>S</original>
    <variation>F</variation>
    <location>
        <position position="194"/>
    </location>
</feature>
<keyword id="KW-0217">Developmental protein</keyword>
<keyword id="KW-0238">DNA-binding</keyword>
<keyword id="KW-0371">Homeobox</keyword>
<keyword id="KW-0539">Nucleus</keyword>
<keyword id="KW-1185">Reference proteome</keyword>
<gene>
    <name type="primary">Dlx4</name>
    <name type="synonym">Dlx7</name>
</gene>
<protein>
    <recommendedName>
        <fullName>Homeobox protein DLX-4</fullName>
    </recommendedName>
    <alternativeName>
        <fullName>Homeobox protein DLX-7</fullName>
    </alternativeName>
</protein>
<sequence length="240" mass="26579">MTSLPCPLPDRGASNVVFPDLAPALSVVAAYPLGLSPGTAASPDLSYSQSYGHPRSYSHPGPATPGDSYLPRQQQLVAPSQPFHRPAEHPQELEAESEKLALSLVPSQQQSLTRKLRKPRTIYSSLQLQHLNQRFQHTQYLALPERAQLAAQLGLTQTQVKIWFQNKRSKYKKLLKQSSGEPEEDFSGRPPSLSPHSPALPFIWGLPKADTLPSSGYDNSHFGAWYQHRSPDVLALPQMM</sequence>
<dbReference type="EMBL" id="U73329">
    <property type="protein sequence ID" value="AAC52995.1"/>
    <property type="molecule type" value="mRNA"/>
</dbReference>
<dbReference type="EMBL" id="AF452637">
    <property type="protein sequence ID" value="AAL99501.1"/>
    <property type="molecule type" value="Genomic_DNA"/>
</dbReference>
<dbReference type="EMBL" id="AK145123">
    <property type="protein sequence ID" value="BAE26247.1"/>
    <property type="molecule type" value="mRNA"/>
</dbReference>
<dbReference type="EMBL" id="AL645850">
    <property type="status" value="NOT_ANNOTATED_CDS"/>
    <property type="molecule type" value="Genomic_DNA"/>
</dbReference>
<dbReference type="EMBL" id="BC106967">
    <property type="protein sequence ID" value="AAI06968.1"/>
    <property type="molecule type" value="mRNA"/>
</dbReference>
<dbReference type="CCDS" id="CCDS25273.1"/>
<dbReference type="RefSeq" id="NP_031893.3">
    <property type="nucleotide sequence ID" value="NM_007867.4"/>
</dbReference>
<dbReference type="SMR" id="P70436"/>
<dbReference type="BioGRID" id="199237">
    <property type="interactions" value="2"/>
</dbReference>
<dbReference type="FunCoup" id="P70436">
    <property type="interactions" value="238"/>
</dbReference>
<dbReference type="IntAct" id="P70436">
    <property type="interactions" value="3"/>
</dbReference>
<dbReference type="STRING" id="10090.ENSMUSP00000021241"/>
<dbReference type="GlyGen" id="P70436">
    <property type="glycosylation" value="1 site"/>
</dbReference>
<dbReference type="PhosphoSitePlus" id="P70436"/>
<dbReference type="PaxDb" id="10090-ENSMUSP00000021241"/>
<dbReference type="PeptideAtlas" id="P70436"/>
<dbReference type="Antibodypedia" id="17993">
    <property type="antibodies" value="430 antibodies from 32 providers"/>
</dbReference>
<dbReference type="DNASU" id="13394"/>
<dbReference type="Ensembl" id="ENSMUST00000021241.8">
    <property type="protein sequence ID" value="ENSMUSP00000021241.7"/>
    <property type="gene ID" value="ENSMUSG00000020871.9"/>
</dbReference>
<dbReference type="GeneID" id="13394"/>
<dbReference type="KEGG" id="mmu:13394"/>
<dbReference type="UCSC" id="uc007kzz.2">
    <property type="organism name" value="mouse"/>
</dbReference>
<dbReference type="AGR" id="MGI:94904"/>
<dbReference type="CTD" id="1748"/>
<dbReference type="MGI" id="MGI:94904">
    <property type="gene designation" value="Dlx4"/>
</dbReference>
<dbReference type="VEuPathDB" id="HostDB:ENSMUSG00000020871"/>
<dbReference type="eggNOG" id="KOG0850">
    <property type="taxonomic scope" value="Eukaryota"/>
</dbReference>
<dbReference type="GeneTree" id="ENSGT00940000162259"/>
<dbReference type="HOGENOM" id="CLU_074733_2_1_1"/>
<dbReference type="InParanoid" id="P70436"/>
<dbReference type="OMA" id="GNNFGAW"/>
<dbReference type="OrthoDB" id="9834564at2759"/>
<dbReference type="PhylomeDB" id="P70436"/>
<dbReference type="TreeFam" id="TF315720"/>
<dbReference type="BioGRID-ORCS" id="13394">
    <property type="hits" value="0 hits in 77 CRISPR screens"/>
</dbReference>
<dbReference type="PRO" id="PR:P70436"/>
<dbReference type="Proteomes" id="UP000000589">
    <property type="component" value="Chromosome 11"/>
</dbReference>
<dbReference type="RNAct" id="P70436">
    <property type="molecule type" value="protein"/>
</dbReference>
<dbReference type="Bgee" id="ENSMUSG00000020871">
    <property type="expression patterns" value="Expressed in hair follicle and 39 other cell types or tissues"/>
</dbReference>
<dbReference type="GO" id="GO:0005654">
    <property type="term" value="C:nucleoplasm"/>
    <property type="evidence" value="ECO:0007669"/>
    <property type="project" value="Ensembl"/>
</dbReference>
<dbReference type="GO" id="GO:0001227">
    <property type="term" value="F:DNA-binding transcription repressor activity, RNA polymerase II-specific"/>
    <property type="evidence" value="ECO:0007669"/>
    <property type="project" value="Ensembl"/>
</dbReference>
<dbReference type="GO" id="GO:0000978">
    <property type="term" value="F:RNA polymerase II cis-regulatory region sequence-specific DNA binding"/>
    <property type="evidence" value="ECO:0007669"/>
    <property type="project" value="Ensembl"/>
</dbReference>
<dbReference type="GO" id="GO:0043565">
    <property type="term" value="F:sequence-specific DNA binding"/>
    <property type="evidence" value="ECO:0000266"/>
    <property type="project" value="MGI"/>
</dbReference>
<dbReference type="CDD" id="cd00086">
    <property type="entry name" value="homeodomain"/>
    <property type="match status" value="1"/>
</dbReference>
<dbReference type="FunFam" id="1.10.10.60:FF:000837">
    <property type="match status" value="1"/>
</dbReference>
<dbReference type="Gene3D" id="1.10.10.60">
    <property type="entry name" value="Homeodomain-like"/>
    <property type="match status" value="1"/>
</dbReference>
<dbReference type="InterPro" id="IPR050460">
    <property type="entry name" value="Distal-less_Homeobox_TF"/>
</dbReference>
<dbReference type="InterPro" id="IPR001356">
    <property type="entry name" value="HD"/>
</dbReference>
<dbReference type="InterPro" id="IPR020479">
    <property type="entry name" value="HD_metazoa"/>
</dbReference>
<dbReference type="InterPro" id="IPR017970">
    <property type="entry name" value="Homeobox_CS"/>
</dbReference>
<dbReference type="InterPro" id="IPR009057">
    <property type="entry name" value="Homeodomain-like_sf"/>
</dbReference>
<dbReference type="InterPro" id="IPR000047">
    <property type="entry name" value="HTH_motif"/>
</dbReference>
<dbReference type="PANTHER" id="PTHR24327">
    <property type="entry name" value="HOMEOBOX PROTEIN"/>
    <property type="match status" value="1"/>
</dbReference>
<dbReference type="PANTHER" id="PTHR24327:SF21">
    <property type="entry name" value="HOMEOBOX PROTEIN DLX-4"/>
    <property type="match status" value="1"/>
</dbReference>
<dbReference type="Pfam" id="PF00046">
    <property type="entry name" value="Homeodomain"/>
    <property type="match status" value="1"/>
</dbReference>
<dbReference type="PRINTS" id="PR00024">
    <property type="entry name" value="HOMEOBOX"/>
</dbReference>
<dbReference type="PRINTS" id="PR00031">
    <property type="entry name" value="HTHREPRESSR"/>
</dbReference>
<dbReference type="SMART" id="SM00389">
    <property type="entry name" value="HOX"/>
    <property type="match status" value="1"/>
</dbReference>
<dbReference type="SUPFAM" id="SSF46689">
    <property type="entry name" value="Homeodomain-like"/>
    <property type="match status" value="1"/>
</dbReference>
<dbReference type="PROSITE" id="PS00027">
    <property type="entry name" value="HOMEOBOX_1"/>
    <property type="match status" value="1"/>
</dbReference>
<dbReference type="PROSITE" id="PS50071">
    <property type="entry name" value="HOMEOBOX_2"/>
    <property type="match status" value="1"/>
</dbReference>
<organism>
    <name type="scientific">Mus musculus</name>
    <name type="common">Mouse</name>
    <dbReference type="NCBI Taxonomy" id="10090"/>
    <lineage>
        <taxon>Eukaryota</taxon>
        <taxon>Metazoa</taxon>
        <taxon>Chordata</taxon>
        <taxon>Craniata</taxon>
        <taxon>Vertebrata</taxon>
        <taxon>Euteleostomi</taxon>
        <taxon>Mammalia</taxon>
        <taxon>Eutheria</taxon>
        <taxon>Euarchontoglires</taxon>
        <taxon>Glires</taxon>
        <taxon>Rodentia</taxon>
        <taxon>Myomorpha</taxon>
        <taxon>Muroidea</taxon>
        <taxon>Muridae</taxon>
        <taxon>Murinae</taxon>
        <taxon>Mus</taxon>
        <taxon>Mus</taxon>
    </lineage>
</organism>
<reference key="1">
    <citation type="journal article" date="1996" name="Genomics">
        <title>Genomic analysis of a new mammalian distal-less gene: Dlx7.</title>
        <authorList>
            <person name="Nakamura S."/>
            <person name="Stock D.W."/>
            <person name="Wydner K.L."/>
            <person name="Bollekens J.A."/>
            <person name="Takeshita K."/>
            <person name="Nagai B.M."/>
            <person name="Chiba S."/>
            <person name="Kitamura T."/>
            <person name="Freeland T.M."/>
            <person name="Zhao Z."/>
            <person name="Minowada J."/>
            <person name="Lawrence J.B."/>
            <person name="Weiss K.M."/>
            <person name="Ruddle F.H."/>
        </authorList>
    </citation>
    <scope>NUCLEOTIDE SEQUENCE [MRNA]</scope>
    <source>
        <strain>Swiss Webster</strain>
        <tissue>Mandible</tissue>
    </source>
</reference>
<reference key="2">
    <citation type="journal article" date="2002" name="Proc. Natl. Acad. Sci. U.S.A.">
        <title>Genomic structure and functional control of the Dlx3-7 bigene cluster.</title>
        <authorList>
            <person name="Sumiyama K."/>
            <person name="Irvine S.Q."/>
            <person name="Stock D.W."/>
            <person name="Weiss K.M."/>
            <person name="Kawasaki K."/>
            <person name="Shimizu N."/>
            <person name="Shashikant C.S."/>
            <person name="Miller W."/>
            <person name="Ruddle F.H."/>
        </authorList>
    </citation>
    <scope>NUCLEOTIDE SEQUENCE [GENOMIC DNA]</scope>
    <source>
        <strain>129/Ola</strain>
    </source>
</reference>
<reference key="3">
    <citation type="journal article" date="2005" name="Science">
        <title>The transcriptional landscape of the mammalian genome.</title>
        <authorList>
            <person name="Carninci P."/>
            <person name="Kasukawa T."/>
            <person name="Katayama S."/>
            <person name="Gough J."/>
            <person name="Frith M.C."/>
            <person name="Maeda N."/>
            <person name="Oyama R."/>
            <person name="Ravasi T."/>
            <person name="Lenhard B."/>
            <person name="Wells C."/>
            <person name="Kodzius R."/>
            <person name="Shimokawa K."/>
            <person name="Bajic V.B."/>
            <person name="Brenner S.E."/>
            <person name="Batalov S."/>
            <person name="Forrest A.R."/>
            <person name="Zavolan M."/>
            <person name="Davis M.J."/>
            <person name="Wilming L.G."/>
            <person name="Aidinis V."/>
            <person name="Allen J.E."/>
            <person name="Ambesi-Impiombato A."/>
            <person name="Apweiler R."/>
            <person name="Aturaliya R.N."/>
            <person name="Bailey T.L."/>
            <person name="Bansal M."/>
            <person name="Baxter L."/>
            <person name="Beisel K.W."/>
            <person name="Bersano T."/>
            <person name="Bono H."/>
            <person name="Chalk A.M."/>
            <person name="Chiu K.P."/>
            <person name="Choudhary V."/>
            <person name="Christoffels A."/>
            <person name="Clutterbuck D.R."/>
            <person name="Crowe M.L."/>
            <person name="Dalla E."/>
            <person name="Dalrymple B.P."/>
            <person name="de Bono B."/>
            <person name="Della Gatta G."/>
            <person name="di Bernardo D."/>
            <person name="Down T."/>
            <person name="Engstrom P."/>
            <person name="Fagiolini M."/>
            <person name="Faulkner G."/>
            <person name="Fletcher C.F."/>
            <person name="Fukushima T."/>
            <person name="Furuno M."/>
            <person name="Futaki S."/>
            <person name="Gariboldi M."/>
            <person name="Georgii-Hemming P."/>
            <person name="Gingeras T.R."/>
            <person name="Gojobori T."/>
            <person name="Green R.E."/>
            <person name="Gustincich S."/>
            <person name="Harbers M."/>
            <person name="Hayashi Y."/>
            <person name="Hensch T.K."/>
            <person name="Hirokawa N."/>
            <person name="Hill D."/>
            <person name="Huminiecki L."/>
            <person name="Iacono M."/>
            <person name="Ikeo K."/>
            <person name="Iwama A."/>
            <person name="Ishikawa T."/>
            <person name="Jakt M."/>
            <person name="Kanapin A."/>
            <person name="Katoh M."/>
            <person name="Kawasawa Y."/>
            <person name="Kelso J."/>
            <person name="Kitamura H."/>
            <person name="Kitano H."/>
            <person name="Kollias G."/>
            <person name="Krishnan S.P."/>
            <person name="Kruger A."/>
            <person name="Kummerfeld S.K."/>
            <person name="Kurochkin I.V."/>
            <person name="Lareau L.F."/>
            <person name="Lazarevic D."/>
            <person name="Lipovich L."/>
            <person name="Liu J."/>
            <person name="Liuni S."/>
            <person name="McWilliam S."/>
            <person name="Madan Babu M."/>
            <person name="Madera M."/>
            <person name="Marchionni L."/>
            <person name="Matsuda H."/>
            <person name="Matsuzawa S."/>
            <person name="Miki H."/>
            <person name="Mignone F."/>
            <person name="Miyake S."/>
            <person name="Morris K."/>
            <person name="Mottagui-Tabar S."/>
            <person name="Mulder N."/>
            <person name="Nakano N."/>
            <person name="Nakauchi H."/>
            <person name="Ng P."/>
            <person name="Nilsson R."/>
            <person name="Nishiguchi S."/>
            <person name="Nishikawa S."/>
            <person name="Nori F."/>
            <person name="Ohara O."/>
            <person name="Okazaki Y."/>
            <person name="Orlando V."/>
            <person name="Pang K.C."/>
            <person name="Pavan W.J."/>
            <person name="Pavesi G."/>
            <person name="Pesole G."/>
            <person name="Petrovsky N."/>
            <person name="Piazza S."/>
            <person name="Reed J."/>
            <person name="Reid J.F."/>
            <person name="Ring B.Z."/>
            <person name="Ringwald M."/>
            <person name="Rost B."/>
            <person name="Ruan Y."/>
            <person name="Salzberg S.L."/>
            <person name="Sandelin A."/>
            <person name="Schneider C."/>
            <person name="Schoenbach C."/>
            <person name="Sekiguchi K."/>
            <person name="Semple C.A."/>
            <person name="Seno S."/>
            <person name="Sessa L."/>
            <person name="Sheng Y."/>
            <person name="Shibata Y."/>
            <person name="Shimada H."/>
            <person name="Shimada K."/>
            <person name="Silva D."/>
            <person name="Sinclair B."/>
            <person name="Sperling S."/>
            <person name="Stupka E."/>
            <person name="Sugiura K."/>
            <person name="Sultana R."/>
            <person name="Takenaka Y."/>
            <person name="Taki K."/>
            <person name="Tammoja K."/>
            <person name="Tan S.L."/>
            <person name="Tang S."/>
            <person name="Taylor M.S."/>
            <person name="Tegner J."/>
            <person name="Teichmann S.A."/>
            <person name="Ueda H.R."/>
            <person name="van Nimwegen E."/>
            <person name="Verardo R."/>
            <person name="Wei C.L."/>
            <person name="Yagi K."/>
            <person name="Yamanishi H."/>
            <person name="Zabarovsky E."/>
            <person name="Zhu S."/>
            <person name="Zimmer A."/>
            <person name="Hide W."/>
            <person name="Bult C."/>
            <person name="Grimmond S.M."/>
            <person name="Teasdale R.D."/>
            <person name="Liu E.T."/>
            <person name="Brusic V."/>
            <person name="Quackenbush J."/>
            <person name="Wahlestedt C."/>
            <person name="Mattick J.S."/>
            <person name="Hume D.A."/>
            <person name="Kai C."/>
            <person name="Sasaki D."/>
            <person name="Tomaru Y."/>
            <person name="Fukuda S."/>
            <person name="Kanamori-Katayama M."/>
            <person name="Suzuki M."/>
            <person name="Aoki J."/>
            <person name="Arakawa T."/>
            <person name="Iida J."/>
            <person name="Imamura K."/>
            <person name="Itoh M."/>
            <person name="Kato T."/>
            <person name="Kawaji H."/>
            <person name="Kawagashira N."/>
            <person name="Kawashima T."/>
            <person name="Kojima M."/>
            <person name="Kondo S."/>
            <person name="Konno H."/>
            <person name="Nakano K."/>
            <person name="Ninomiya N."/>
            <person name="Nishio T."/>
            <person name="Okada M."/>
            <person name="Plessy C."/>
            <person name="Shibata K."/>
            <person name="Shiraki T."/>
            <person name="Suzuki S."/>
            <person name="Tagami M."/>
            <person name="Waki K."/>
            <person name="Watahiki A."/>
            <person name="Okamura-Oho Y."/>
            <person name="Suzuki H."/>
            <person name="Kawai J."/>
            <person name="Hayashizaki Y."/>
        </authorList>
    </citation>
    <scope>NUCLEOTIDE SEQUENCE [LARGE SCALE MRNA]</scope>
    <source>
        <tissue>Mammary gland</tissue>
    </source>
</reference>
<reference key="4">
    <citation type="journal article" date="2009" name="PLoS Biol.">
        <title>Lineage-specific biology revealed by a finished genome assembly of the mouse.</title>
        <authorList>
            <person name="Church D.M."/>
            <person name="Goodstadt L."/>
            <person name="Hillier L.W."/>
            <person name="Zody M.C."/>
            <person name="Goldstein S."/>
            <person name="She X."/>
            <person name="Bult C.J."/>
            <person name="Agarwala R."/>
            <person name="Cherry J.L."/>
            <person name="DiCuccio M."/>
            <person name="Hlavina W."/>
            <person name="Kapustin Y."/>
            <person name="Meric P."/>
            <person name="Maglott D."/>
            <person name="Birtle Z."/>
            <person name="Marques A.C."/>
            <person name="Graves T."/>
            <person name="Zhou S."/>
            <person name="Teague B."/>
            <person name="Potamousis K."/>
            <person name="Churas C."/>
            <person name="Place M."/>
            <person name="Herschleb J."/>
            <person name="Runnheim R."/>
            <person name="Forrest D."/>
            <person name="Amos-Landgraf J."/>
            <person name="Schwartz D.C."/>
            <person name="Cheng Z."/>
            <person name="Lindblad-Toh K."/>
            <person name="Eichler E.E."/>
            <person name="Ponting C.P."/>
        </authorList>
    </citation>
    <scope>NUCLEOTIDE SEQUENCE [LARGE SCALE GENOMIC DNA]</scope>
    <source>
        <strain>C57BL/6J</strain>
    </source>
</reference>
<reference key="5">
    <citation type="journal article" date="2004" name="Genome Res.">
        <title>The status, quality, and expansion of the NIH full-length cDNA project: the Mammalian Gene Collection (MGC).</title>
        <authorList>
            <consortium name="The MGC Project Team"/>
        </authorList>
    </citation>
    <scope>NUCLEOTIDE SEQUENCE [LARGE SCALE MRNA]</scope>
</reference>
<reference key="6">
    <citation type="journal article" date="2015" name="Hum. Mol. Genet.">
        <title>DLX4 is associated with orofacial clefting and abnormal jaw development.</title>
        <authorList>
            <person name="Wu D."/>
            <person name="Mandal S."/>
            <person name="Choi A."/>
            <person name="Anderson A."/>
            <person name="Prochazkova M."/>
            <person name="Perry H."/>
            <person name="Gil-Da-Silva-Lopes V.L."/>
            <person name="Lao R."/>
            <person name="Wan E."/>
            <person name="Tang P.L."/>
            <person name="Kwok P.Y."/>
            <person name="Klein O."/>
            <person name="Zhuan B."/>
            <person name="Slavotinek A.M."/>
        </authorList>
    </citation>
    <scope>DEVELOPMENTAL STAGE</scope>
</reference>
<accession>P70436</accession>
<accession>Q3UM51</accession>
<accession>Q8R4I3</accession>
<comment type="function">
    <text evidence="1">May play a role in determining the production of hemoglobin S. May act as a repressor. During embryonic development, plays a role in palatogenesis.</text>
</comment>
<comment type="subcellular location">
    <subcellularLocation>
        <location evidence="1">Nucleus</location>
    </subcellularLocation>
</comment>
<comment type="tissue specificity">
    <text>Branchial arches, molar and incisor teeth and limbs.</text>
</comment>
<comment type="developmental stage">
    <text evidence="4">Expressed in the mesenchyme of the anterior palate at 12.5 dpc, prior to the time of palate closure. Expression levels decrease at later time periods after palate closure.</text>
</comment>
<comment type="similarity">
    <text evidence="5">Belongs to the distal-less homeobox family.</text>
</comment>